<dbReference type="EMBL" id="CP001400">
    <property type="protein sequence ID" value="ACP37929.1"/>
    <property type="molecule type" value="Genomic_DNA"/>
</dbReference>
<dbReference type="RefSeq" id="WP_012711191.1">
    <property type="nucleotide sequence ID" value="NC_012588.1"/>
</dbReference>
<dbReference type="SMR" id="C3MYF0"/>
<dbReference type="KEGG" id="sia:M1425_1168"/>
<dbReference type="HOGENOM" id="CLU_196480_1_0_2"/>
<dbReference type="Proteomes" id="UP000001350">
    <property type="component" value="Chromosome"/>
</dbReference>
<dbReference type="GO" id="GO:1990904">
    <property type="term" value="C:ribonucleoprotein complex"/>
    <property type="evidence" value="ECO:0007669"/>
    <property type="project" value="UniProtKB-KW"/>
</dbReference>
<dbReference type="GO" id="GO:0030515">
    <property type="term" value="F:snoRNA binding"/>
    <property type="evidence" value="ECO:0007669"/>
    <property type="project" value="InterPro"/>
</dbReference>
<dbReference type="GO" id="GO:0001522">
    <property type="term" value="P:pseudouridine synthesis"/>
    <property type="evidence" value="ECO:0007669"/>
    <property type="project" value="InterPro"/>
</dbReference>
<dbReference type="GO" id="GO:0006364">
    <property type="term" value="P:rRNA processing"/>
    <property type="evidence" value="ECO:0007669"/>
    <property type="project" value="UniProtKB-UniRule"/>
</dbReference>
<dbReference type="Gene3D" id="2.20.28.40">
    <property type="entry name" value="H/ACA ribonucleoprotein complex, subunit Nop10"/>
    <property type="match status" value="1"/>
</dbReference>
<dbReference type="HAMAP" id="MF_00803">
    <property type="entry name" value="Nop10"/>
    <property type="match status" value="1"/>
</dbReference>
<dbReference type="InterPro" id="IPR007264">
    <property type="entry name" value="H/ACA_rnp_Nop10"/>
</dbReference>
<dbReference type="InterPro" id="IPR036756">
    <property type="entry name" value="H/ACA_rnp_Nop10_sf"/>
</dbReference>
<dbReference type="InterPro" id="IPR023532">
    <property type="entry name" value="Nop10_arc-typ"/>
</dbReference>
<dbReference type="NCBIfam" id="NF009623">
    <property type="entry name" value="PRK13130.1"/>
    <property type="match status" value="1"/>
</dbReference>
<dbReference type="PANTHER" id="PTHR13305:SF0">
    <property type="entry name" value="H_ACA RIBONUCLEOPROTEIN COMPLEX SUBUNIT 3"/>
    <property type="match status" value="1"/>
</dbReference>
<dbReference type="PANTHER" id="PTHR13305">
    <property type="entry name" value="RIBOSOME BIOGENESIS PROTEIN NOP10"/>
    <property type="match status" value="1"/>
</dbReference>
<dbReference type="Pfam" id="PF04135">
    <property type="entry name" value="Nop10p"/>
    <property type="match status" value="1"/>
</dbReference>
<dbReference type="SUPFAM" id="SSF144210">
    <property type="entry name" value="Nop10-like SnoRNP"/>
    <property type="match status" value="1"/>
</dbReference>
<name>NOP10_SACI4</name>
<proteinExistence type="inferred from homology"/>
<keyword id="KW-0687">Ribonucleoprotein</keyword>
<keyword id="KW-0690">Ribosome biogenesis</keyword>
<keyword id="KW-0698">rRNA processing</keyword>
<gene>
    <name evidence="1" type="primary">nop10</name>
    <name type="ordered locus">M1425_1168</name>
</gene>
<accession>C3MYF0</accession>
<organism>
    <name type="scientific">Saccharolobus islandicus (strain M.14.25 / Kamchatka #1)</name>
    <name type="common">Sulfolobus islandicus</name>
    <dbReference type="NCBI Taxonomy" id="427317"/>
    <lineage>
        <taxon>Archaea</taxon>
        <taxon>Thermoproteota</taxon>
        <taxon>Thermoprotei</taxon>
        <taxon>Sulfolobales</taxon>
        <taxon>Sulfolobaceae</taxon>
        <taxon>Saccharolobus</taxon>
    </lineage>
</organism>
<feature type="chain" id="PRO_1000212994" description="Ribosome biogenesis protein Nop10">
    <location>
        <begin position="1"/>
        <end position="56"/>
    </location>
</feature>
<evidence type="ECO:0000255" key="1">
    <source>
        <dbReference type="HAMAP-Rule" id="MF_00803"/>
    </source>
</evidence>
<sequence>MKWKMKKCPKDNTYTFKDICPVCGSKTMIPHPSRFSPEDKYVKYRIELKKGVKLNC</sequence>
<protein>
    <recommendedName>
        <fullName evidence="1">Ribosome biogenesis protein Nop10</fullName>
    </recommendedName>
</protein>
<comment type="function">
    <text evidence="1">Involved in ribosome biogenesis; more specifically in 18S rRNA pseudouridylation and in cleavage of pre-rRNA.</text>
</comment>
<comment type="similarity">
    <text evidence="1">Belongs to the NOP10 family.</text>
</comment>
<reference key="1">
    <citation type="journal article" date="2009" name="Proc. Natl. Acad. Sci. U.S.A.">
        <title>Biogeography of the Sulfolobus islandicus pan-genome.</title>
        <authorList>
            <person name="Reno M.L."/>
            <person name="Held N.L."/>
            <person name="Fields C.J."/>
            <person name="Burke P.V."/>
            <person name="Whitaker R.J."/>
        </authorList>
    </citation>
    <scope>NUCLEOTIDE SEQUENCE [LARGE SCALE GENOMIC DNA]</scope>
    <source>
        <strain>M.14.25 / Kamchatka #1</strain>
    </source>
</reference>